<name>FRSA_SHISS</name>
<comment type="function">
    <text evidence="1">Catalyzes the hydrolysis of esters.</text>
</comment>
<comment type="catalytic activity">
    <reaction evidence="1">
        <text>a carboxylic ester + H2O = an alcohol + a carboxylate + H(+)</text>
        <dbReference type="Rhea" id="RHEA:21164"/>
        <dbReference type="ChEBI" id="CHEBI:15377"/>
        <dbReference type="ChEBI" id="CHEBI:15378"/>
        <dbReference type="ChEBI" id="CHEBI:29067"/>
        <dbReference type="ChEBI" id="CHEBI:30879"/>
        <dbReference type="ChEBI" id="CHEBI:33308"/>
        <dbReference type="EC" id="3.1.1.1"/>
    </reaction>
</comment>
<comment type="similarity">
    <text evidence="1">Belongs to the FrsA family.</text>
</comment>
<gene>
    <name evidence="1" type="primary">frsA</name>
    <name type="ordered locus">SSON_0281</name>
</gene>
<protein>
    <recommendedName>
        <fullName evidence="1">Esterase FrsA</fullName>
        <ecNumber evidence="1">3.1.1.1</ecNumber>
    </recommendedName>
</protein>
<reference key="1">
    <citation type="journal article" date="2005" name="Nucleic Acids Res.">
        <title>Genome dynamics and diversity of Shigella species, the etiologic agents of bacillary dysentery.</title>
        <authorList>
            <person name="Yang F."/>
            <person name="Yang J."/>
            <person name="Zhang X."/>
            <person name="Chen L."/>
            <person name="Jiang Y."/>
            <person name="Yan Y."/>
            <person name="Tang X."/>
            <person name="Wang J."/>
            <person name="Xiong Z."/>
            <person name="Dong J."/>
            <person name="Xue Y."/>
            <person name="Zhu Y."/>
            <person name="Xu X."/>
            <person name="Sun L."/>
            <person name="Chen S."/>
            <person name="Nie H."/>
            <person name="Peng J."/>
            <person name="Xu J."/>
            <person name="Wang Y."/>
            <person name="Yuan Z."/>
            <person name="Wen Y."/>
            <person name="Yao Z."/>
            <person name="Shen Y."/>
            <person name="Qiang B."/>
            <person name="Hou Y."/>
            <person name="Yu J."/>
            <person name="Jin Q."/>
        </authorList>
    </citation>
    <scope>NUCLEOTIDE SEQUENCE [LARGE SCALE GENOMIC DNA]</scope>
    <source>
        <strain>Ss046</strain>
    </source>
</reference>
<evidence type="ECO:0000255" key="1">
    <source>
        <dbReference type="HAMAP-Rule" id="MF_01063"/>
    </source>
</evidence>
<sequence>MTQANLSETLFKPRFKHPETSTLVRRFNHGAQPPVQSALDGKTIPHWYRMINRLMWIWRGIDPREILDVQARIVMSDAERTDDDLYDTVIGYRGGNWIYEWAIQAMVWQQKACAEEDPQLSGRHWLHAATLYNIAAYPHLKGDDLAEQAQALSNRAYEEAAQRLPGTMRQMEFTVPGGAPITGFLHMPKGDGPFPTVLMCGGLDAMQTDYYSLYERYFAPRGIAMLTIDMPSVGFSSKWKLTQDSSLLHQHVLKALPNVPWVDHTRVAAFGFRFGANVAVRLAYLESPRLKAVACLGPVVHTLLSDFKCQQQVPEMYLDVLASRLGMHDASDEALRVELNRYSLKVQGLLGRRCPTPMLSGYWKNDPFSPEEDSRLITSSSADGKLLEIPFNPVYRNFDKGLQEITGWIEKRLC</sequence>
<keyword id="KW-0378">Hydrolase</keyword>
<keyword id="KW-1185">Reference proteome</keyword>
<keyword id="KW-0719">Serine esterase</keyword>
<feature type="chain" id="PRO_1000064491" description="Esterase FrsA">
    <location>
        <begin position="1"/>
        <end position="414"/>
    </location>
</feature>
<dbReference type="EC" id="3.1.1.1" evidence="1"/>
<dbReference type="EMBL" id="CP000038">
    <property type="protein sequence ID" value="AAZ87064.1"/>
    <property type="molecule type" value="Genomic_DNA"/>
</dbReference>
<dbReference type="RefSeq" id="WP_000189530.1">
    <property type="nucleotide sequence ID" value="NC_007384.1"/>
</dbReference>
<dbReference type="SMR" id="Q3Z598"/>
<dbReference type="ESTHER" id="shifl-yafa">
    <property type="family name" value="Duf_1100-R"/>
</dbReference>
<dbReference type="GeneID" id="93777154"/>
<dbReference type="KEGG" id="ssn:SSON_0281"/>
<dbReference type="HOGENOM" id="CLU_036819_0_0_6"/>
<dbReference type="Proteomes" id="UP000002529">
    <property type="component" value="Chromosome"/>
</dbReference>
<dbReference type="GO" id="GO:0106435">
    <property type="term" value="F:carboxylesterase activity"/>
    <property type="evidence" value="ECO:0007669"/>
    <property type="project" value="UniProtKB-EC"/>
</dbReference>
<dbReference type="FunFam" id="3.40.50.1820:FF:000022">
    <property type="entry name" value="Esterase FrsA"/>
    <property type="match status" value="1"/>
</dbReference>
<dbReference type="Gene3D" id="3.40.50.1820">
    <property type="entry name" value="alpha/beta hydrolase"/>
    <property type="match status" value="1"/>
</dbReference>
<dbReference type="HAMAP" id="MF_01063">
    <property type="entry name" value="FrsA"/>
    <property type="match status" value="1"/>
</dbReference>
<dbReference type="InterPro" id="IPR029058">
    <property type="entry name" value="AB_hydrolase_fold"/>
</dbReference>
<dbReference type="InterPro" id="IPR043423">
    <property type="entry name" value="FrsA"/>
</dbReference>
<dbReference type="InterPro" id="IPR010520">
    <property type="entry name" value="FrsA-like"/>
</dbReference>
<dbReference type="InterPro" id="IPR050261">
    <property type="entry name" value="FrsA_esterase"/>
</dbReference>
<dbReference type="NCBIfam" id="NF003460">
    <property type="entry name" value="PRK05077.1"/>
    <property type="match status" value="1"/>
</dbReference>
<dbReference type="PANTHER" id="PTHR22946">
    <property type="entry name" value="DIENELACTONE HYDROLASE DOMAIN-CONTAINING PROTEIN-RELATED"/>
    <property type="match status" value="1"/>
</dbReference>
<dbReference type="PANTHER" id="PTHR22946:SF4">
    <property type="entry name" value="ESTERASE FRSA"/>
    <property type="match status" value="1"/>
</dbReference>
<dbReference type="Pfam" id="PF06500">
    <property type="entry name" value="FrsA-like"/>
    <property type="match status" value="1"/>
</dbReference>
<dbReference type="SUPFAM" id="SSF53474">
    <property type="entry name" value="alpha/beta-Hydrolases"/>
    <property type="match status" value="1"/>
</dbReference>
<accession>Q3Z598</accession>
<proteinExistence type="inferred from homology"/>
<organism>
    <name type="scientific">Shigella sonnei (strain Ss046)</name>
    <dbReference type="NCBI Taxonomy" id="300269"/>
    <lineage>
        <taxon>Bacteria</taxon>
        <taxon>Pseudomonadati</taxon>
        <taxon>Pseudomonadota</taxon>
        <taxon>Gammaproteobacteria</taxon>
        <taxon>Enterobacterales</taxon>
        <taxon>Enterobacteriaceae</taxon>
        <taxon>Shigella</taxon>
    </lineage>
</organism>